<reference key="1">
    <citation type="journal article" date="2005" name="Proc. Natl. Acad. Sci. U.S.A.">
        <title>Comparison of the complete genome sequences of Pseudomonas syringae pv. syringae B728a and pv. tomato DC3000.</title>
        <authorList>
            <person name="Feil H."/>
            <person name="Feil W.S."/>
            <person name="Chain P."/>
            <person name="Larimer F."/>
            <person name="Dibartolo G."/>
            <person name="Copeland A."/>
            <person name="Lykidis A."/>
            <person name="Trong S."/>
            <person name="Nolan M."/>
            <person name="Goltsman E."/>
            <person name="Thiel J."/>
            <person name="Malfatti S."/>
            <person name="Loper J.E."/>
            <person name="Lapidus A."/>
            <person name="Detter J.C."/>
            <person name="Land M."/>
            <person name="Richardson P.M."/>
            <person name="Kyrpides N.C."/>
            <person name="Ivanova N."/>
            <person name="Lindow S.E."/>
        </authorList>
    </citation>
    <scope>NUCLEOTIDE SEQUENCE [LARGE SCALE GENOMIC DNA]</scope>
    <source>
        <strain>B728a</strain>
    </source>
</reference>
<sequence length="488" mass="54580">MKFKDLRDFVQQLEQRGELKRIQMPISPVLEMTEICDRTLRAKGPALLFEKPVGFDIPVLGNLFGTPERVAMGMGAEAVSELREIGKLLAFLKEPEPPKGLKDAWSKLPIFRKVIAMAPKVVKDAPCQEVVIEGDDVDLGMLPVQTCWPGDVAPLITWGLTVTKGPNKERQNLGIYRQQVIGRNKIIMRWLSHRGGALDFRDWCVKHPGEPYPVAVALGADPATILGAVTPVPDSLSEYAFAGLLRGSRTELIKCRGSNLQVPASAEIVLEGVIHPGEMADEGPYGDHTGYYNEVDSFPVLTVERITHRIKPIYHSTYTGRPPDEPAILGVALNEVFVPILQKQFPEIVDFYLPPEGCSYRMAVVTIKKQYPGHAKRVMLGVWSFLRQFMYTKFVIVTDDDINARDWNDVIWAITTRMDPKRDTVMIDNTPIDYLDFASPVSGLGSKMGLDATNKWPGETSREWGRAIVKDEATTRRVDEIWTQLGID</sequence>
<comment type="function">
    <text evidence="1">Catalyzes the decarboxylation of 3-octaprenyl-4-hydroxy benzoate to 2-octaprenylphenol, an intermediate step in ubiquinone biosynthesis.</text>
</comment>
<comment type="catalytic activity">
    <reaction evidence="1">
        <text>a 4-hydroxy-3-(all-trans-polyprenyl)benzoate + H(+) = a 2-(all-trans-polyprenyl)phenol + CO2</text>
        <dbReference type="Rhea" id="RHEA:41680"/>
        <dbReference type="Rhea" id="RHEA-COMP:9514"/>
        <dbReference type="Rhea" id="RHEA-COMP:9516"/>
        <dbReference type="ChEBI" id="CHEBI:1269"/>
        <dbReference type="ChEBI" id="CHEBI:15378"/>
        <dbReference type="ChEBI" id="CHEBI:16526"/>
        <dbReference type="ChEBI" id="CHEBI:78396"/>
        <dbReference type="EC" id="4.1.1.98"/>
    </reaction>
</comment>
<comment type="cofactor">
    <cofactor evidence="1">
        <name>prenylated FMN</name>
        <dbReference type="ChEBI" id="CHEBI:87746"/>
    </cofactor>
    <text evidence="1">Binds 1 prenylated FMN per subunit.</text>
</comment>
<comment type="cofactor">
    <cofactor evidence="1">
        <name>Mn(2+)</name>
        <dbReference type="ChEBI" id="CHEBI:29035"/>
    </cofactor>
</comment>
<comment type="pathway">
    <text evidence="1">Cofactor biosynthesis; ubiquinone biosynthesis.</text>
</comment>
<comment type="subunit">
    <text evidence="1">Homohexamer.</text>
</comment>
<comment type="subcellular location">
    <subcellularLocation>
        <location evidence="1">Cell membrane</location>
        <topology evidence="1">Peripheral membrane protein</topology>
    </subcellularLocation>
</comment>
<comment type="similarity">
    <text evidence="1">Belongs to the UbiD family.</text>
</comment>
<comment type="sequence caution" evidence="2">
    <conflict type="erroneous initiation">
        <sequence resource="EMBL-CDS" id="AAY35375"/>
    </conflict>
</comment>
<protein>
    <recommendedName>
        <fullName evidence="1">3-octaprenyl-4-hydroxybenzoate carboxy-lyase</fullName>
        <ecNumber evidence="1">4.1.1.98</ecNumber>
    </recommendedName>
    <alternativeName>
        <fullName evidence="1">Polyprenyl p-hydroxybenzoate decarboxylase</fullName>
    </alternativeName>
</protein>
<keyword id="KW-1003">Cell membrane</keyword>
<keyword id="KW-0210">Decarboxylase</keyword>
<keyword id="KW-0285">Flavoprotein</keyword>
<keyword id="KW-0288">FMN</keyword>
<keyword id="KW-0456">Lyase</keyword>
<keyword id="KW-0464">Manganese</keyword>
<keyword id="KW-0472">Membrane</keyword>
<keyword id="KW-0479">Metal-binding</keyword>
<keyword id="KW-0831">Ubiquinone biosynthesis</keyword>
<accession>Q4ZZP7</accession>
<evidence type="ECO:0000255" key="1">
    <source>
        <dbReference type="HAMAP-Rule" id="MF_01636"/>
    </source>
</evidence>
<evidence type="ECO:0000305" key="2"/>
<name>UBID_PSEU2</name>
<organism>
    <name type="scientific">Pseudomonas syringae pv. syringae (strain B728a)</name>
    <dbReference type="NCBI Taxonomy" id="205918"/>
    <lineage>
        <taxon>Bacteria</taxon>
        <taxon>Pseudomonadati</taxon>
        <taxon>Pseudomonadota</taxon>
        <taxon>Gammaproteobacteria</taxon>
        <taxon>Pseudomonadales</taxon>
        <taxon>Pseudomonadaceae</taxon>
        <taxon>Pseudomonas</taxon>
        <taxon>Pseudomonas syringae</taxon>
    </lineage>
</organism>
<proteinExistence type="inferred from homology"/>
<gene>
    <name evidence="1" type="primary">ubiD</name>
    <name type="ordered locus">Psyr_0302</name>
</gene>
<dbReference type="EC" id="4.1.1.98" evidence="1"/>
<dbReference type="EMBL" id="CP000075">
    <property type="protein sequence ID" value="AAY35375.1"/>
    <property type="status" value="ALT_INIT"/>
    <property type="molecule type" value="Genomic_DNA"/>
</dbReference>
<dbReference type="RefSeq" id="WP_003317344.1">
    <property type="nucleotide sequence ID" value="NC_007005.1"/>
</dbReference>
<dbReference type="RefSeq" id="YP_233413.1">
    <property type="nucleotide sequence ID" value="NC_007005.1"/>
</dbReference>
<dbReference type="SMR" id="Q4ZZP7"/>
<dbReference type="STRING" id="205918.Psyr_0302"/>
<dbReference type="KEGG" id="psb:Psyr_0302"/>
<dbReference type="PATRIC" id="fig|205918.7.peg.304"/>
<dbReference type="eggNOG" id="COG0043">
    <property type="taxonomic scope" value="Bacteria"/>
</dbReference>
<dbReference type="HOGENOM" id="CLU_023348_4_1_6"/>
<dbReference type="OrthoDB" id="9809841at2"/>
<dbReference type="UniPathway" id="UPA00232"/>
<dbReference type="Proteomes" id="UP000000426">
    <property type="component" value="Chromosome"/>
</dbReference>
<dbReference type="GO" id="GO:0005829">
    <property type="term" value="C:cytosol"/>
    <property type="evidence" value="ECO:0007669"/>
    <property type="project" value="TreeGrafter"/>
</dbReference>
<dbReference type="GO" id="GO:0005886">
    <property type="term" value="C:plasma membrane"/>
    <property type="evidence" value="ECO:0007669"/>
    <property type="project" value="UniProtKB-SubCell"/>
</dbReference>
<dbReference type="GO" id="GO:0008694">
    <property type="term" value="F:3-octaprenyl-4-hydroxybenzoate carboxy-lyase activity"/>
    <property type="evidence" value="ECO:0007669"/>
    <property type="project" value="UniProtKB-UniRule"/>
</dbReference>
<dbReference type="GO" id="GO:0046872">
    <property type="term" value="F:metal ion binding"/>
    <property type="evidence" value="ECO:0007669"/>
    <property type="project" value="UniProtKB-KW"/>
</dbReference>
<dbReference type="GO" id="GO:0006744">
    <property type="term" value="P:ubiquinone biosynthetic process"/>
    <property type="evidence" value="ECO:0007669"/>
    <property type="project" value="UniProtKB-UniRule"/>
</dbReference>
<dbReference type="FunFam" id="1.20.5.570:FF:000001">
    <property type="entry name" value="3-octaprenyl-4-hydroxybenzoate carboxy-lyase"/>
    <property type="match status" value="1"/>
</dbReference>
<dbReference type="FunFam" id="3.40.1670.10:FF:000001">
    <property type="entry name" value="3-octaprenyl-4-hydroxybenzoate carboxy-lyase"/>
    <property type="match status" value="1"/>
</dbReference>
<dbReference type="Gene3D" id="1.20.5.570">
    <property type="entry name" value="Single helix bin"/>
    <property type="match status" value="1"/>
</dbReference>
<dbReference type="Gene3D" id="3.40.1670.10">
    <property type="entry name" value="UbiD C-terminal domain-like"/>
    <property type="match status" value="1"/>
</dbReference>
<dbReference type="HAMAP" id="MF_01636">
    <property type="entry name" value="UbiD"/>
    <property type="match status" value="1"/>
</dbReference>
<dbReference type="InterPro" id="IPR002830">
    <property type="entry name" value="UbiD"/>
</dbReference>
<dbReference type="InterPro" id="IPR049381">
    <property type="entry name" value="UbiD-like_C"/>
</dbReference>
<dbReference type="InterPro" id="IPR049383">
    <property type="entry name" value="UbiD-like_N"/>
</dbReference>
<dbReference type="InterPro" id="IPR023677">
    <property type="entry name" value="UbiD_bacteria"/>
</dbReference>
<dbReference type="InterPro" id="IPR048304">
    <property type="entry name" value="UbiD_Rift_dom"/>
</dbReference>
<dbReference type="NCBIfam" id="NF008175">
    <property type="entry name" value="PRK10922.1"/>
    <property type="match status" value="1"/>
</dbReference>
<dbReference type="NCBIfam" id="TIGR00148">
    <property type="entry name" value="UbiD family decarboxylase"/>
    <property type="match status" value="1"/>
</dbReference>
<dbReference type="PANTHER" id="PTHR30108">
    <property type="entry name" value="3-OCTAPRENYL-4-HYDROXYBENZOATE CARBOXY-LYASE-RELATED"/>
    <property type="match status" value="1"/>
</dbReference>
<dbReference type="PANTHER" id="PTHR30108:SF17">
    <property type="entry name" value="FERULIC ACID DECARBOXYLASE 1"/>
    <property type="match status" value="1"/>
</dbReference>
<dbReference type="Pfam" id="PF01977">
    <property type="entry name" value="UbiD"/>
    <property type="match status" value="1"/>
</dbReference>
<dbReference type="Pfam" id="PF20696">
    <property type="entry name" value="UbiD_C"/>
    <property type="match status" value="1"/>
</dbReference>
<dbReference type="Pfam" id="PF20695">
    <property type="entry name" value="UbiD_N"/>
    <property type="match status" value="1"/>
</dbReference>
<dbReference type="SUPFAM" id="SSF50475">
    <property type="entry name" value="FMN-binding split barrel"/>
    <property type="match status" value="1"/>
</dbReference>
<dbReference type="SUPFAM" id="SSF143968">
    <property type="entry name" value="UbiD C-terminal domain-like"/>
    <property type="match status" value="1"/>
</dbReference>
<feature type="chain" id="PRO_0000267684" description="3-octaprenyl-4-hydroxybenzoate carboxy-lyase">
    <location>
        <begin position="1"/>
        <end position="488"/>
    </location>
</feature>
<feature type="active site" description="Proton donor" evidence="1">
    <location>
        <position position="287"/>
    </location>
</feature>
<feature type="binding site" evidence="1">
    <location>
        <position position="172"/>
    </location>
    <ligand>
        <name>Mn(2+)</name>
        <dbReference type="ChEBI" id="CHEBI:29035"/>
    </ligand>
</feature>
<feature type="binding site" evidence="1">
    <location>
        <begin position="175"/>
        <end position="177"/>
    </location>
    <ligand>
        <name>prenylated FMN</name>
        <dbReference type="ChEBI" id="CHEBI:87746"/>
    </ligand>
</feature>
<feature type="binding site" evidence="1">
    <location>
        <begin position="189"/>
        <end position="191"/>
    </location>
    <ligand>
        <name>prenylated FMN</name>
        <dbReference type="ChEBI" id="CHEBI:87746"/>
    </ligand>
</feature>
<feature type="binding site" evidence="1">
    <location>
        <begin position="194"/>
        <end position="195"/>
    </location>
    <ligand>
        <name>prenylated FMN</name>
        <dbReference type="ChEBI" id="CHEBI:87746"/>
    </ligand>
</feature>
<feature type="binding site" evidence="1">
    <location>
        <position position="238"/>
    </location>
    <ligand>
        <name>Mn(2+)</name>
        <dbReference type="ChEBI" id="CHEBI:29035"/>
    </ligand>
</feature>